<evidence type="ECO:0000255" key="1">
    <source>
        <dbReference type="HAMAP-Rule" id="MF_01201"/>
    </source>
</evidence>
<proteinExistence type="inferred from homology"/>
<organism>
    <name type="scientific">Mycobacterium avium (strain 104)</name>
    <dbReference type="NCBI Taxonomy" id="243243"/>
    <lineage>
        <taxon>Bacteria</taxon>
        <taxon>Bacillati</taxon>
        <taxon>Actinomycetota</taxon>
        <taxon>Actinomycetes</taxon>
        <taxon>Mycobacteriales</taxon>
        <taxon>Mycobacteriaceae</taxon>
        <taxon>Mycobacterium</taxon>
        <taxon>Mycobacterium avium complex (MAC)</taxon>
    </lineage>
</organism>
<feature type="chain" id="PRO_1000066011" description="Alanine racemase">
    <location>
        <begin position="1"/>
        <end position="388"/>
    </location>
</feature>
<feature type="active site" description="Proton acceptor; specific for D-alanine" evidence="1">
    <location>
        <position position="44"/>
    </location>
</feature>
<feature type="active site" description="Proton acceptor; specific for L-alanine" evidence="1">
    <location>
        <position position="273"/>
    </location>
</feature>
<feature type="binding site" evidence="1">
    <location>
        <position position="142"/>
    </location>
    <ligand>
        <name>substrate</name>
    </ligand>
</feature>
<feature type="binding site" evidence="1">
    <location>
        <position position="321"/>
    </location>
    <ligand>
        <name>substrate</name>
    </ligand>
</feature>
<feature type="modified residue" description="N6-(pyridoxal phosphate)lysine" evidence="1">
    <location>
        <position position="44"/>
    </location>
</feature>
<sequence>MAVTPISLTPGVLAEALVDLGAIEHNVRLLCEQARGAQVMAVVKADGYGHGAVQTARAALAAGAAELGVATVDEALALRAAGISAPVLAWLHPPGIDFRPALLAGVQIGLSSQRQLDELLTAVRDTGRTATVTVKVDTGLNRNGVPPAQYPSMLTALRRAVAEQAIVPRGLMSHMVYADQPANPVNDVQAQRFTDMLAQAREQGVRFEVAHLSNSSATMSRPDLAFDMVRPGIAVYGLSPVPELGDMGLVPAMTVKCTVALVKSIRAGESVSYGHTWTAQRDTNLALLPVGYADGIFRSLGGRLQVSINGRRRPGVGRICMDQFVVDLGPGRPDVAEGDEAILFGPGSNGEPTAQDWADLLGTIHYEVVTSPRGRITRTYREAHTVES</sequence>
<keyword id="KW-0413">Isomerase</keyword>
<keyword id="KW-0663">Pyridoxal phosphate</keyword>
<gene>
    <name type="primary">alr</name>
    <name type="ordered locus">MAV_4372</name>
</gene>
<accession>A0QKR9</accession>
<reference key="1">
    <citation type="submission" date="2006-10" db="EMBL/GenBank/DDBJ databases">
        <authorList>
            <person name="Fleischmann R.D."/>
            <person name="Dodson R.J."/>
            <person name="Haft D.H."/>
            <person name="Merkel J.S."/>
            <person name="Nelson W.C."/>
            <person name="Fraser C.M."/>
        </authorList>
    </citation>
    <scope>NUCLEOTIDE SEQUENCE [LARGE SCALE GENOMIC DNA]</scope>
    <source>
        <strain>104</strain>
    </source>
</reference>
<dbReference type="EC" id="5.1.1.1" evidence="1"/>
<dbReference type="EMBL" id="CP000479">
    <property type="protein sequence ID" value="ABK67912.1"/>
    <property type="molecule type" value="Genomic_DNA"/>
</dbReference>
<dbReference type="SMR" id="A0QKR9"/>
<dbReference type="KEGG" id="mav:MAV_4372"/>
<dbReference type="HOGENOM" id="CLU_028393_0_0_11"/>
<dbReference type="UniPathway" id="UPA00042">
    <property type="reaction ID" value="UER00497"/>
</dbReference>
<dbReference type="Proteomes" id="UP000001574">
    <property type="component" value="Chromosome"/>
</dbReference>
<dbReference type="GO" id="GO:0005829">
    <property type="term" value="C:cytosol"/>
    <property type="evidence" value="ECO:0007669"/>
    <property type="project" value="TreeGrafter"/>
</dbReference>
<dbReference type="GO" id="GO:0008784">
    <property type="term" value="F:alanine racemase activity"/>
    <property type="evidence" value="ECO:0007669"/>
    <property type="project" value="UniProtKB-UniRule"/>
</dbReference>
<dbReference type="GO" id="GO:0030170">
    <property type="term" value="F:pyridoxal phosphate binding"/>
    <property type="evidence" value="ECO:0007669"/>
    <property type="project" value="UniProtKB-UniRule"/>
</dbReference>
<dbReference type="GO" id="GO:0030632">
    <property type="term" value="P:D-alanine biosynthetic process"/>
    <property type="evidence" value="ECO:0007669"/>
    <property type="project" value="UniProtKB-UniRule"/>
</dbReference>
<dbReference type="GO" id="GO:0009252">
    <property type="term" value="P:peptidoglycan biosynthetic process"/>
    <property type="evidence" value="ECO:0007669"/>
    <property type="project" value="TreeGrafter"/>
</dbReference>
<dbReference type="CDD" id="cd00430">
    <property type="entry name" value="PLPDE_III_AR"/>
    <property type="match status" value="1"/>
</dbReference>
<dbReference type="FunFam" id="2.40.37.10:FF:000015">
    <property type="entry name" value="Alanine racemase"/>
    <property type="match status" value="1"/>
</dbReference>
<dbReference type="FunFam" id="3.20.20.10:FF:000002">
    <property type="entry name" value="Alanine racemase"/>
    <property type="match status" value="1"/>
</dbReference>
<dbReference type="Gene3D" id="3.20.20.10">
    <property type="entry name" value="Alanine racemase"/>
    <property type="match status" value="1"/>
</dbReference>
<dbReference type="Gene3D" id="2.40.37.10">
    <property type="entry name" value="Lyase, Ornithine Decarboxylase, Chain A, domain 1"/>
    <property type="match status" value="1"/>
</dbReference>
<dbReference type="HAMAP" id="MF_01201">
    <property type="entry name" value="Ala_racemase"/>
    <property type="match status" value="1"/>
</dbReference>
<dbReference type="InterPro" id="IPR000821">
    <property type="entry name" value="Ala_racemase"/>
</dbReference>
<dbReference type="InterPro" id="IPR009006">
    <property type="entry name" value="Ala_racemase/Decarboxylase_C"/>
</dbReference>
<dbReference type="InterPro" id="IPR011079">
    <property type="entry name" value="Ala_racemase_C"/>
</dbReference>
<dbReference type="InterPro" id="IPR001608">
    <property type="entry name" value="Ala_racemase_N"/>
</dbReference>
<dbReference type="InterPro" id="IPR020622">
    <property type="entry name" value="Ala_racemase_pyridoxalP-BS"/>
</dbReference>
<dbReference type="InterPro" id="IPR029066">
    <property type="entry name" value="PLP-binding_barrel"/>
</dbReference>
<dbReference type="NCBIfam" id="TIGR00492">
    <property type="entry name" value="alr"/>
    <property type="match status" value="1"/>
</dbReference>
<dbReference type="PANTHER" id="PTHR30511">
    <property type="entry name" value="ALANINE RACEMASE"/>
    <property type="match status" value="1"/>
</dbReference>
<dbReference type="PANTHER" id="PTHR30511:SF0">
    <property type="entry name" value="ALANINE RACEMASE, CATABOLIC-RELATED"/>
    <property type="match status" value="1"/>
</dbReference>
<dbReference type="Pfam" id="PF00842">
    <property type="entry name" value="Ala_racemase_C"/>
    <property type="match status" value="1"/>
</dbReference>
<dbReference type="Pfam" id="PF01168">
    <property type="entry name" value="Ala_racemase_N"/>
    <property type="match status" value="1"/>
</dbReference>
<dbReference type="PRINTS" id="PR00992">
    <property type="entry name" value="ALARACEMASE"/>
</dbReference>
<dbReference type="SMART" id="SM01005">
    <property type="entry name" value="Ala_racemase_C"/>
    <property type="match status" value="1"/>
</dbReference>
<dbReference type="SUPFAM" id="SSF50621">
    <property type="entry name" value="Alanine racemase C-terminal domain-like"/>
    <property type="match status" value="1"/>
</dbReference>
<dbReference type="SUPFAM" id="SSF51419">
    <property type="entry name" value="PLP-binding barrel"/>
    <property type="match status" value="1"/>
</dbReference>
<dbReference type="PROSITE" id="PS00395">
    <property type="entry name" value="ALANINE_RACEMASE"/>
    <property type="match status" value="1"/>
</dbReference>
<protein>
    <recommendedName>
        <fullName evidence="1">Alanine racemase</fullName>
        <ecNumber evidence="1">5.1.1.1</ecNumber>
    </recommendedName>
</protein>
<comment type="function">
    <text evidence="1">Catalyzes the interconversion of L-alanine and D-alanine. May also act on other amino acids.</text>
</comment>
<comment type="catalytic activity">
    <reaction evidence="1">
        <text>L-alanine = D-alanine</text>
        <dbReference type="Rhea" id="RHEA:20249"/>
        <dbReference type="ChEBI" id="CHEBI:57416"/>
        <dbReference type="ChEBI" id="CHEBI:57972"/>
        <dbReference type="EC" id="5.1.1.1"/>
    </reaction>
</comment>
<comment type="cofactor">
    <cofactor evidence="1">
        <name>pyridoxal 5'-phosphate</name>
        <dbReference type="ChEBI" id="CHEBI:597326"/>
    </cofactor>
</comment>
<comment type="pathway">
    <text evidence="1">Amino-acid biosynthesis; D-alanine biosynthesis; D-alanine from L-alanine: step 1/1.</text>
</comment>
<comment type="similarity">
    <text evidence="1">Belongs to the alanine racemase family.</text>
</comment>
<name>ALR_MYCA1</name>